<keyword id="KW-0002">3D-structure</keyword>
<keyword id="KW-0249">Electron transport</keyword>
<keyword id="KW-0472">Membrane</keyword>
<keyword id="KW-0496">Mitochondrion</keyword>
<keyword id="KW-0520">NAD</keyword>
<keyword id="KW-1185">Reference proteome</keyword>
<keyword id="KW-0679">Respiratory chain</keyword>
<keyword id="KW-0691">RNA editing</keyword>
<keyword id="KW-1278">Translocase</keyword>
<keyword id="KW-0812">Transmembrane</keyword>
<keyword id="KW-1133">Transmembrane helix</keyword>
<keyword id="KW-0813">Transport</keyword>
<keyword id="KW-0830">Ubiquinone</keyword>
<gene>
    <name type="primary">ND3</name>
    <name type="synonym">NAD3</name>
    <name type="ordered locus">AtMg00990</name>
</gene>
<proteinExistence type="evidence at protein level"/>
<evidence type="ECO:0000250" key="1"/>
<evidence type="ECO:0000255" key="2"/>
<evidence type="ECO:0000269" key="3">
    <source>
    </source>
</evidence>
<evidence type="ECO:0000269" key="4">
    <source>
    </source>
</evidence>
<evidence type="ECO:0000269" key="5">
    <source>
    </source>
</evidence>
<evidence type="ECO:0000305" key="6"/>
<evidence type="ECO:0007829" key="7">
    <source>
        <dbReference type="PDB" id="8BEF"/>
    </source>
</evidence>
<comment type="function">
    <text evidence="1">Core subunit of the mitochondrial membrane respiratory chain NADH dehydrogenase (Complex I) that is believed to belong to the minimal assembly required for catalysis. Complex I functions in the transfer of electrons from NADH to the respiratory chain. The immediate electron acceptor for the enzyme is believed to be ubiquinone (By similarity).</text>
</comment>
<comment type="catalytic activity">
    <reaction>
        <text>a ubiquinone + NADH + 5 H(+)(in) = a ubiquinol + NAD(+) + 4 H(+)(out)</text>
        <dbReference type="Rhea" id="RHEA:29091"/>
        <dbReference type="Rhea" id="RHEA-COMP:9565"/>
        <dbReference type="Rhea" id="RHEA-COMP:9566"/>
        <dbReference type="ChEBI" id="CHEBI:15378"/>
        <dbReference type="ChEBI" id="CHEBI:16389"/>
        <dbReference type="ChEBI" id="CHEBI:17976"/>
        <dbReference type="ChEBI" id="CHEBI:57540"/>
        <dbReference type="ChEBI" id="CHEBI:57945"/>
        <dbReference type="EC" id="7.1.1.2"/>
    </reaction>
</comment>
<comment type="subunit">
    <text>Complex I is composed of at least 49 different subunits.</text>
</comment>
<comment type="subcellular location">
    <subcellularLocation>
        <location evidence="1">Mitochondrion membrane</location>
        <topology evidence="1">Multi-pass membrane protein</topology>
    </subcellularLocation>
</comment>
<comment type="RNA editing">
    <location>
        <position position="3" evidence="3 4 5"/>
    </location>
    <location>
        <position position="9" evidence="3 4 5"/>
    </location>
    <location>
        <position position="28" evidence="3 4 5"/>
    </location>
    <location>
        <position position="50" evidence="3 4 5"/>
    </location>
    <location>
        <position position="71" evidence="3 4 5"/>
    </location>
    <location>
        <position position="84" evidence="3 4 5"/>
    </location>
    <location>
        <position position="85" evidence="3 4 5"/>
    </location>
    <location>
        <position position="116" evidence="3 4 5"/>
    </location>
    <location>
        <position position="118" evidence="3 4 5"/>
    </location>
</comment>
<comment type="miscellaneous">
    <text>A stretch of 270 kb of the mitochondrial genome is duplicated within the centromere of chromosome 2 resulting in the duplication of the gene. The expression of this duplicated gene (At2g07751) is not demonstrated. It is also probably not RNA edited and therefore differs in all the positions known to be edited.</text>
</comment>
<comment type="similarity">
    <text evidence="6">Belongs to the complex I subunit 3 family.</text>
</comment>
<comment type="sequence caution" evidence="6">
    <conflict type="erroneous gene model prediction">
        <sequence resource="EMBL-CDS" id="AAM15514"/>
    </conflict>
</comment>
<comment type="sequence caution" evidence="6">
    <conflict type="erroneous initiation">
        <sequence resource="EMBL-CDS" id="DAB41517"/>
    </conflict>
    <text>Truncated N-terminus.</text>
</comment>
<dbReference type="EC" id="7.1.1.2"/>
<dbReference type="EMBL" id="Y08501">
    <property type="protein sequence ID" value="CAA69839.3"/>
    <property type="status" value="ALT_SEQ"/>
    <property type="molecule type" value="Genomic_DNA"/>
</dbReference>
<dbReference type="EMBL" id="BK010421">
    <property type="protein sequence ID" value="DAB41517.2"/>
    <property type="status" value="ALT_INIT"/>
    <property type="molecule type" value="Genomic_DNA"/>
</dbReference>
<dbReference type="EMBL" id="AC007143">
    <property type="status" value="NOT_ANNOTATED_CDS"/>
    <property type="molecule type" value="Genomic_DNA"/>
</dbReference>
<dbReference type="EMBL" id="AC007730">
    <property type="protein sequence ID" value="AAM15514.1"/>
    <property type="status" value="ALT_SEQ"/>
    <property type="molecule type" value="Genomic_DNA"/>
</dbReference>
<dbReference type="EMBL" id="EF488914">
    <property type="protein sequence ID" value="ABS50626.1"/>
    <property type="molecule type" value="mRNA"/>
</dbReference>
<dbReference type="EMBL" id="EF488915">
    <property type="protein sequence ID" value="ABS50627.1"/>
    <property type="molecule type" value="mRNA"/>
</dbReference>
<dbReference type="RefSeq" id="NP_085553.2">
    <property type="nucleotide sequence ID" value="NC_001284.2"/>
</dbReference>
<dbReference type="PDB" id="7A23">
    <property type="method" value="EM"/>
    <property type="resolution" value="3.70 A"/>
    <property type="chains" value="J=1-119"/>
</dbReference>
<dbReference type="PDB" id="7A24">
    <property type="method" value="EM"/>
    <property type="resolution" value="3.80 A"/>
    <property type="chains" value="J=1-119"/>
</dbReference>
<dbReference type="PDB" id="7AQQ">
    <property type="method" value="EM"/>
    <property type="resolution" value="3.06 A"/>
    <property type="chains" value="A=1-119"/>
</dbReference>
<dbReference type="PDB" id="7AR7">
    <property type="method" value="EM"/>
    <property type="resolution" value="3.72 A"/>
    <property type="chains" value="A=1-119"/>
</dbReference>
<dbReference type="PDB" id="7AR8">
    <property type="method" value="EM"/>
    <property type="resolution" value="3.53 A"/>
    <property type="chains" value="A=1-119"/>
</dbReference>
<dbReference type="PDB" id="7ARB">
    <property type="method" value="EM"/>
    <property type="resolution" value="3.41 A"/>
    <property type="chains" value="A=1-119"/>
</dbReference>
<dbReference type="PDB" id="8BEF">
    <property type="method" value="EM"/>
    <property type="resolution" value="2.13 A"/>
    <property type="chains" value="A=1-119"/>
</dbReference>
<dbReference type="PDB" id="8BPX">
    <property type="method" value="EM"/>
    <property type="resolution" value="2.09 A"/>
    <property type="chains" value="A=1-119"/>
</dbReference>
<dbReference type="PDB" id="8BQ5">
    <property type="method" value="EM"/>
    <property type="resolution" value="2.73 A"/>
    <property type="chains" value="A=1-119"/>
</dbReference>
<dbReference type="PDB" id="8BQ6">
    <property type="method" value="EM"/>
    <property type="resolution" value="2.80 A"/>
    <property type="chains" value="A=1-119"/>
</dbReference>
<dbReference type="PDBsum" id="7A23"/>
<dbReference type="PDBsum" id="7A24"/>
<dbReference type="PDBsum" id="7AQQ"/>
<dbReference type="PDBsum" id="7AR7"/>
<dbReference type="PDBsum" id="7AR8"/>
<dbReference type="PDBsum" id="7ARB"/>
<dbReference type="PDBsum" id="8BEF"/>
<dbReference type="PDBsum" id="8BPX"/>
<dbReference type="PDBsum" id="8BQ5"/>
<dbReference type="PDBsum" id="8BQ6"/>
<dbReference type="EMDB" id="EMD-11872"/>
<dbReference type="EMDB" id="EMD-11875"/>
<dbReference type="EMDB" id="EMD-11876"/>
<dbReference type="EMDB" id="EMD-11878"/>
<dbReference type="EMDB" id="EMD-16000"/>
<dbReference type="EMDB" id="EMD-16168"/>
<dbReference type="EMDB" id="EMD-16171"/>
<dbReference type="EMDB" id="EMD-16172"/>
<dbReference type="SMR" id="P92533"/>
<dbReference type="FunCoup" id="P92533">
    <property type="interactions" value="67"/>
</dbReference>
<dbReference type="STRING" id="3702.A0A2P2CLG7"/>
<dbReference type="PaxDb" id="3702-ATMG00990.1"/>
<dbReference type="Araport" id="ATMG00990"/>
<dbReference type="TAIR" id="ATMG00990">
    <property type="gene designation" value="NAD3"/>
</dbReference>
<dbReference type="eggNOG" id="KOG4662">
    <property type="taxonomic scope" value="Eukaryota"/>
</dbReference>
<dbReference type="InParanoid" id="P92533"/>
<dbReference type="BioCyc" id="ARA:ATMG00990-MONOMER"/>
<dbReference type="PRO" id="PR:P92533"/>
<dbReference type="Proteomes" id="UP000006548">
    <property type="component" value="Mitochondrion MT"/>
</dbReference>
<dbReference type="ExpressionAtlas" id="P92533">
    <property type="expression patterns" value="baseline and differential"/>
</dbReference>
<dbReference type="GO" id="GO:0031966">
    <property type="term" value="C:mitochondrial membrane"/>
    <property type="evidence" value="ECO:0007669"/>
    <property type="project" value="UniProtKB-SubCell"/>
</dbReference>
<dbReference type="GO" id="GO:0030964">
    <property type="term" value="C:NADH dehydrogenase complex"/>
    <property type="evidence" value="ECO:0000318"/>
    <property type="project" value="GO_Central"/>
</dbReference>
<dbReference type="GO" id="GO:0008137">
    <property type="term" value="F:NADH dehydrogenase (ubiquinone) activity"/>
    <property type="evidence" value="ECO:0000318"/>
    <property type="project" value="GO_Central"/>
</dbReference>
<dbReference type="FunFam" id="1.20.58.1610:FF:000006">
    <property type="entry name" value="NADH-ubiquinone oxidoreductase chain 3"/>
    <property type="match status" value="1"/>
</dbReference>
<dbReference type="Gene3D" id="1.20.58.1610">
    <property type="entry name" value="NADH:ubiquinone/plastoquinone oxidoreductase, chain 3"/>
    <property type="match status" value="1"/>
</dbReference>
<dbReference type="HAMAP" id="MF_01394">
    <property type="entry name" value="NDH1_NuoA"/>
    <property type="match status" value="1"/>
</dbReference>
<dbReference type="InterPro" id="IPR023043">
    <property type="entry name" value="NAD(P)H_OxRDtase_bac/plastid"/>
</dbReference>
<dbReference type="InterPro" id="IPR000440">
    <property type="entry name" value="NADH_UbQ/plastoQ_OxRdtase_su3"/>
</dbReference>
<dbReference type="InterPro" id="IPR038430">
    <property type="entry name" value="NDAH_ubi_oxred_su3_sf"/>
</dbReference>
<dbReference type="PANTHER" id="PTHR11058">
    <property type="entry name" value="NADH-UBIQUINONE OXIDOREDUCTASE CHAIN 3"/>
    <property type="match status" value="1"/>
</dbReference>
<dbReference type="PANTHER" id="PTHR11058:SF9">
    <property type="entry name" value="NADH-UBIQUINONE OXIDOREDUCTASE CHAIN 3"/>
    <property type="match status" value="1"/>
</dbReference>
<dbReference type="Pfam" id="PF00507">
    <property type="entry name" value="Oxidored_q4"/>
    <property type="match status" value="1"/>
</dbReference>
<sequence>MMLEFAPIFIYLVISLLVSLILLGVPFLFASNSSTYPEKLSAYECGFDPFGDARSRFDIRFYLVSILFLIFDLEVTFFFPWAVSLNKIDLFGFWSMMAFLFILTIGFLYEWKRGALDWE</sequence>
<organism>
    <name type="scientific">Arabidopsis thaliana</name>
    <name type="common">Mouse-ear cress</name>
    <dbReference type="NCBI Taxonomy" id="3702"/>
    <lineage>
        <taxon>Eukaryota</taxon>
        <taxon>Viridiplantae</taxon>
        <taxon>Streptophyta</taxon>
        <taxon>Embryophyta</taxon>
        <taxon>Tracheophyta</taxon>
        <taxon>Spermatophyta</taxon>
        <taxon>Magnoliopsida</taxon>
        <taxon>eudicotyledons</taxon>
        <taxon>Gunneridae</taxon>
        <taxon>Pentapetalae</taxon>
        <taxon>rosids</taxon>
        <taxon>malvids</taxon>
        <taxon>Brassicales</taxon>
        <taxon>Brassicaceae</taxon>
        <taxon>Camelineae</taxon>
        <taxon>Arabidopsis</taxon>
    </lineage>
</organism>
<geneLocation type="mitochondrion"/>
<protein>
    <recommendedName>
        <fullName>NADH-ubiquinone oxidoreductase chain 3</fullName>
        <ecNumber>7.1.1.2</ecNumber>
    </recommendedName>
    <alternativeName>
        <fullName>NADH dehydrogenase subunit 3</fullName>
    </alternativeName>
</protein>
<name>NU3M_ARATH</name>
<reference key="1">
    <citation type="journal article" date="1997" name="Nat. Genet.">
        <title>The mitochondrial genome of Arabidopsis thaliana contains 57 genes in 366,924 nucleotides.</title>
        <authorList>
            <person name="Unseld M."/>
            <person name="Marienfeld J.R."/>
            <person name="Brandt P."/>
            <person name="Brennicke A."/>
        </authorList>
    </citation>
    <scope>NUCLEOTIDE SEQUENCE [LARGE SCALE GENOMIC DNA]</scope>
    <source>
        <strain>cv. C24</strain>
    </source>
</reference>
<reference key="2">
    <citation type="journal article" date="2018" name="Plant Cell">
        <title>Correction of persistent errors in Arabidopsis reference mitochondrial genomes.</title>
        <authorList>
            <person name="Sloan D.B."/>
            <person name="Wu Z."/>
            <person name="Sharbrough J."/>
        </authorList>
    </citation>
    <scope>NUCLEOTIDE SEQUENCE [LARGE SCALE GENOMIC DNA]</scope>
    <scope>RNA EDITING</scope>
    <source>
        <strain>cv. Columbia</strain>
    </source>
</reference>
<reference key="3">
    <citation type="journal article" date="1999" name="Nature">
        <title>Sequence and analysis of chromosome 2 of the plant Arabidopsis thaliana.</title>
        <authorList>
            <person name="Lin X."/>
            <person name="Kaul S."/>
            <person name="Rounsley S.D."/>
            <person name="Shea T.P."/>
            <person name="Benito M.-I."/>
            <person name="Town C.D."/>
            <person name="Fujii C.Y."/>
            <person name="Mason T.M."/>
            <person name="Bowman C.L."/>
            <person name="Barnstead M.E."/>
            <person name="Feldblyum T.V."/>
            <person name="Buell C.R."/>
            <person name="Ketchum K.A."/>
            <person name="Lee J.J."/>
            <person name="Ronning C.M."/>
            <person name="Koo H.L."/>
            <person name="Moffat K.S."/>
            <person name="Cronin L.A."/>
            <person name="Shen M."/>
            <person name="Pai G."/>
            <person name="Van Aken S."/>
            <person name="Umayam L."/>
            <person name="Tallon L.J."/>
            <person name="Gill J.E."/>
            <person name="Adams M.D."/>
            <person name="Carrera A.J."/>
            <person name="Creasy T.H."/>
            <person name="Goodman H.M."/>
            <person name="Somerville C.R."/>
            <person name="Copenhaver G.P."/>
            <person name="Preuss D."/>
            <person name="Nierman W.C."/>
            <person name="White O."/>
            <person name="Eisen J.A."/>
            <person name="Salzberg S.L."/>
            <person name="Fraser C.M."/>
            <person name="Venter J.C."/>
        </authorList>
    </citation>
    <scope>NUCLEOTIDE SEQUENCE [LARGE SCALE GENOMIC DNA] (AT2G07751)</scope>
    <source>
        <strain>cv. Columbia</strain>
    </source>
</reference>
<reference key="4">
    <citation type="journal article" date="2008" name="Genetics">
        <title>Genetic architecture of mitochondrial editing in Arabidopsis thaliana.</title>
        <authorList>
            <person name="Bentolila S."/>
            <person name="Elliott L.E."/>
            <person name="Hanson M.R."/>
        </authorList>
    </citation>
    <scope>NUCLEOTIDE SEQUENCE [MRNA] OF 19-108</scope>
    <scope>RNA EDITING</scope>
    <source>
        <strain>cv. Columbia</strain>
        <strain>cv. Landsberg erecta</strain>
        <tissue>Rosette leaf</tissue>
    </source>
</reference>
<reference key="5">
    <citation type="journal article" date="1999" name="Proc. Natl. Acad. Sci. U.S.A.">
        <title>RNA editing in Arabidopsis mitochondria effects 441 C to U changes in ORFs.</title>
        <authorList>
            <person name="Giege P."/>
            <person name="Brennicke A."/>
        </authorList>
    </citation>
    <scope>RNA EDITING</scope>
</reference>
<feature type="chain" id="PRO_0000117707" description="NADH-ubiquinone oxidoreductase chain 3">
    <location>
        <begin position="1"/>
        <end position="119"/>
    </location>
</feature>
<feature type="transmembrane region" description="Helical" evidence="2">
    <location>
        <begin position="8"/>
        <end position="28"/>
    </location>
</feature>
<feature type="transmembrane region" description="Helical" evidence="2">
    <location>
        <begin position="63"/>
        <end position="83"/>
    </location>
</feature>
<feature type="transmembrane region" description="Helical" evidence="2">
    <location>
        <begin position="88"/>
        <end position="108"/>
    </location>
</feature>
<feature type="helix" evidence="7">
    <location>
        <begin position="5"/>
        <end position="24"/>
    </location>
</feature>
<feature type="helix" evidence="7">
    <location>
        <begin position="25"/>
        <end position="27"/>
    </location>
</feature>
<feature type="helix" evidence="7">
    <location>
        <begin position="59"/>
        <end position="112"/>
    </location>
</feature>
<feature type="turn" evidence="7">
    <location>
        <begin position="113"/>
        <end position="116"/>
    </location>
</feature>
<accession>P92533</accession>
<accession>A0A2P2CLG7</accession>
<accession>A7KNH1</accession>
<accession>Q2V2T5</accession>
<accession>Q8S878</accession>